<protein>
    <recommendedName>
        <fullName evidence="1">Probable GTP-binding protein EngB</fullName>
    </recommendedName>
</protein>
<feature type="chain" id="PRO_1000005851" description="Probable GTP-binding protein EngB">
    <location>
        <begin position="1"/>
        <end position="199"/>
    </location>
</feature>
<feature type="domain" description="EngB-type G" evidence="1">
    <location>
        <begin position="24"/>
        <end position="197"/>
    </location>
</feature>
<feature type="binding site" evidence="1">
    <location>
        <begin position="32"/>
        <end position="39"/>
    </location>
    <ligand>
        <name>GTP</name>
        <dbReference type="ChEBI" id="CHEBI:37565"/>
    </ligand>
</feature>
<feature type="binding site" evidence="1">
    <location>
        <position position="39"/>
    </location>
    <ligand>
        <name>Mg(2+)</name>
        <dbReference type="ChEBI" id="CHEBI:18420"/>
    </ligand>
</feature>
<feature type="binding site" evidence="1">
    <location>
        <begin position="59"/>
        <end position="63"/>
    </location>
    <ligand>
        <name>GTP</name>
        <dbReference type="ChEBI" id="CHEBI:37565"/>
    </ligand>
</feature>
<feature type="binding site" evidence="1">
    <location>
        <position position="61"/>
    </location>
    <ligand>
        <name>Mg(2+)</name>
        <dbReference type="ChEBI" id="CHEBI:18420"/>
    </ligand>
</feature>
<feature type="binding site" evidence="1">
    <location>
        <begin position="77"/>
        <end position="80"/>
    </location>
    <ligand>
        <name>GTP</name>
        <dbReference type="ChEBI" id="CHEBI:37565"/>
    </ligand>
</feature>
<feature type="binding site" evidence="1">
    <location>
        <begin position="144"/>
        <end position="147"/>
    </location>
    <ligand>
        <name>GTP</name>
        <dbReference type="ChEBI" id="CHEBI:37565"/>
    </ligand>
</feature>
<feature type="binding site" evidence="1">
    <location>
        <begin position="176"/>
        <end position="178"/>
    </location>
    <ligand>
        <name>GTP</name>
        <dbReference type="ChEBI" id="CHEBI:37565"/>
    </ligand>
</feature>
<name>ENGB_RUTMC</name>
<gene>
    <name evidence="1" type="primary">engB</name>
    <name type="ordered locus">Rmag_0200</name>
</gene>
<evidence type="ECO:0000255" key="1">
    <source>
        <dbReference type="HAMAP-Rule" id="MF_00321"/>
    </source>
</evidence>
<accession>A1AVN1</accession>
<comment type="function">
    <text evidence="1">Necessary for normal cell division and for the maintenance of normal septation.</text>
</comment>
<comment type="cofactor">
    <cofactor evidence="1">
        <name>Mg(2+)</name>
        <dbReference type="ChEBI" id="CHEBI:18420"/>
    </cofactor>
</comment>
<comment type="similarity">
    <text evidence="1">Belongs to the TRAFAC class TrmE-Era-EngA-EngB-Septin-like GTPase superfamily. EngB GTPase family.</text>
</comment>
<organism>
    <name type="scientific">Ruthia magnifica subsp. Calyptogena magnifica</name>
    <dbReference type="NCBI Taxonomy" id="413404"/>
    <lineage>
        <taxon>Bacteria</taxon>
        <taxon>Pseudomonadati</taxon>
        <taxon>Pseudomonadota</taxon>
        <taxon>Gammaproteobacteria</taxon>
        <taxon>Candidatus Pseudothioglobaceae</taxon>
        <taxon>Candidatus Ruthturnera</taxon>
    </lineage>
</organism>
<sequence>MHKHYHQAKFLLSCPSLKGCPPDEGYEVIFAGRSNAGKSSVINTLTLQNKLAKVSRTPGKTQHFVFFELDKDRRLVDLPGYGYAKVPKRVKTKWHKDINEYFNKRDCLRGTVLVMDIRHPFKLFDQMVLNWCHSINLSTQIILTKSDKLKKGAASNTYLKVHNQIKKYPYVDVQLFSSLKKQGLEILGARLNTFFGYVD</sequence>
<keyword id="KW-0131">Cell cycle</keyword>
<keyword id="KW-0132">Cell division</keyword>
<keyword id="KW-0342">GTP-binding</keyword>
<keyword id="KW-0460">Magnesium</keyword>
<keyword id="KW-0479">Metal-binding</keyword>
<keyword id="KW-0547">Nucleotide-binding</keyword>
<keyword id="KW-0717">Septation</keyword>
<reference key="1">
    <citation type="journal article" date="2007" name="Science">
        <title>The Calyptogena magnifica chemoautotrophic symbiont genome.</title>
        <authorList>
            <person name="Newton I.L.G."/>
            <person name="Woyke T."/>
            <person name="Auchtung T.A."/>
            <person name="Dilly G.F."/>
            <person name="Dutton R.J."/>
            <person name="Fisher M.C."/>
            <person name="Fontanez K.M."/>
            <person name="Lau E."/>
            <person name="Stewart F.J."/>
            <person name="Richardson P.M."/>
            <person name="Barry K.W."/>
            <person name="Saunders E."/>
            <person name="Detter J.C."/>
            <person name="Wu D."/>
            <person name="Eisen J.A."/>
            <person name="Cavanaugh C.M."/>
        </authorList>
    </citation>
    <scope>NUCLEOTIDE SEQUENCE [LARGE SCALE GENOMIC DNA]</scope>
</reference>
<proteinExistence type="inferred from homology"/>
<dbReference type="EMBL" id="CP000488">
    <property type="protein sequence ID" value="ABL01988.1"/>
    <property type="molecule type" value="Genomic_DNA"/>
</dbReference>
<dbReference type="SMR" id="A1AVN1"/>
<dbReference type="STRING" id="413404.Rmag_0200"/>
<dbReference type="KEGG" id="rma:Rmag_0200"/>
<dbReference type="eggNOG" id="COG0218">
    <property type="taxonomic scope" value="Bacteria"/>
</dbReference>
<dbReference type="HOGENOM" id="CLU_033732_1_0_6"/>
<dbReference type="OrthoDB" id="9804921at2"/>
<dbReference type="Proteomes" id="UP000002587">
    <property type="component" value="Chromosome"/>
</dbReference>
<dbReference type="GO" id="GO:0005829">
    <property type="term" value="C:cytosol"/>
    <property type="evidence" value="ECO:0007669"/>
    <property type="project" value="TreeGrafter"/>
</dbReference>
<dbReference type="GO" id="GO:0005525">
    <property type="term" value="F:GTP binding"/>
    <property type="evidence" value="ECO:0007669"/>
    <property type="project" value="UniProtKB-UniRule"/>
</dbReference>
<dbReference type="GO" id="GO:0046872">
    <property type="term" value="F:metal ion binding"/>
    <property type="evidence" value="ECO:0007669"/>
    <property type="project" value="UniProtKB-KW"/>
</dbReference>
<dbReference type="GO" id="GO:0000917">
    <property type="term" value="P:division septum assembly"/>
    <property type="evidence" value="ECO:0007669"/>
    <property type="project" value="UniProtKB-KW"/>
</dbReference>
<dbReference type="CDD" id="cd01876">
    <property type="entry name" value="YihA_EngB"/>
    <property type="match status" value="1"/>
</dbReference>
<dbReference type="FunFam" id="3.40.50.300:FF:000098">
    <property type="entry name" value="Probable GTP-binding protein EngB"/>
    <property type="match status" value="1"/>
</dbReference>
<dbReference type="Gene3D" id="3.40.50.300">
    <property type="entry name" value="P-loop containing nucleotide triphosphate hydrolases"/>
    <property type="match status" value="1"/>
</dbReference>
<dbReference type="HAMAP" id="MF_00321">
    <property type="entry name" value="GTPase_EngB"/>
    <property type="match status" value="1"/>
</dbReference>
<dbReference type="InterPro" id="IPR030393">
    <property type="entry name" value="G_ENGB_dom"/>
</dbReference>
<dbReference type="InterPro" id="IPR006073">
    <property type="entry name" value="GTP-bd"/>
</dbReference>
<dbReference type="InterPro" id="IPR019987">
    <property type="entry name" value="GTP-bd_ribosome_bio_YsxC"/>
</dbReference>
<dbReference type="InterPro" id="IPR027417">
    <property type="entry name" value="P-loop_NTPase"/>
</dbReference>
<dbReference type="NCBIfam" id="TIGR03598">
    <property type="entry name" value="GTPase_YsxC"/>
    <property type="match status" value="1"/>
</dbReference>
<dbReference type="PANTHER" id="PTHR11649:SF13">
    <property type="entry name" value="ENGB-TYPE G DOMAIN-CONTAINING PROTEIN"/>
    <property type="match status" value="1"/>
</dbReference>
<dbReference type="PANTHER" id="PTHR11649">
    <property type="entry name" value="MSS1/TRME-RELATED GTP-BINDING PROTEIN"/>
    <property type="match status" value="1"/>
</dbReference>
<dbReference type="Pfam" id="PF01926">
    <property type="entry name" value="MMR_HSR1"/>
    <property type="match status" value="1"/>
</dbReference>
<dbReference type="SUPFAM" id="SSF52540">
    <property type="entry name" value="P-loop containing nucleoside triphosphate hydrolases"/>
    <property type="match status" value="1"/>
</dbReference>
<dbReference type="PROSITE" id="PS51706">
    <property type="entry name" value="G_ENGB"/>
    <property type="match status" value="1"/>
</dbReference>